<organism>
    <name type="scientific">Caldanaerobacter subterraneus subsp. tengcongensis (strain DSM 15242 / JCM 11007 / NBRC 100824 / MB4)</name>
    <name type="common">Thermoanaerobacter tengcongensis</name>
    <dbReference type="NCBI Taxonomy" id="273068"/>
    <lineage>
        <taxon>Bacteria</taxon>
        <taxon>Bacillati</taxon>
        <taxon>Bacillota</taxon>
        <taxon>Clostridia</taxon>
        <taxon>Thermoanaerobacterales</taxon>
        <taxon>Thermoanaerobacteraceae</taxon>
        <taxon>Caldanaerobacter</taxon>
    </lineage>
</organism>
<protein>
    <recommendedName>
        <fullName evidence="1">ATP synthase subunit delta</fullName>
    </recommendedName>
    <alternativeName>
        <fullName evidence="1">ATP synthase F(1) sector subunit delta</fullName>
    </alternativeName>
    <alternativeName>
        <fullName evidence="1">F-type ATPase subunit delta</fullName>
        <shortName evidence="1">F-ATPase subunit delta</shortName>
    </alternativeName>
</protein>
<proteinExistence type="inferred from homology"/>
<sequence>MEQIIAKRYASALFDVAKKEDRVKEYYEELKKAVEILQTEAVWKIFVNKSIDKTKKMKFVEEVLEGFSKEIVNFVKVAISKHRENLIKEILNEFEALYKAYFNMIDVKVISAYPLKEEVLNLVREKLEKKYNKKVNLIPVVDKEILGGLKLVIGNTVIDGSIKARLEALLKNMRQAV</sequence>
<gene>
    <name evidence="1" type="primary">atpH</name>
    <name type="ordered locus">TTE0634</name>
</gene>
<keyword id="KW-0066">ATP synthesis</keyword>
<keyword id="KW-1003">Cell membrane</keyword>
<keyword id="KW-0139">CF(1)</keyword>
<keyword id="KW-0375">Hydrogen ion transport</keyword>
<keyword id="KW-0406">Ion transport</keyword>
<keyword id="KW-0472">Membrane</keyword>
<keyword id="KW-1185">Reference proteome</keyword>
<keyword id="KW-0813">Transport</keyword>
<name>ATPD_CALS4</name>
<comment type="function">
    <text evidence="1">F(1)F(0) ATP synthase produces ATP from ADP in the presence of a proton or sodium gradient. F-type ATPases consist of two structural domains, F(1) containing the extramembraneous catalytic core and F(0) containing the membrane proton channel, linked together by a central stalk and a peripheral stalk. During catalysis, ATP synthesis in the catalytic domain of F(1) is coupled via a rotary mechanism of the central stalk subunits to proton translocation.</text>
</comment>
<comment type="function">
    <text evidence="1">This protein is part of the stalk that links CF(0) to CF(1). It either transmits conformational changes from CF(0) to CF(1) or is implicated in proton conduction.</text>
</comment>
<comment type="subunit">
    <text evidence="1">F-type ATPases have 2 components, F(1) - the catalytic core - and F(0) - the membrane proton channel. F(1) has five subunits: alpha(3), beta(3), gamma(1), delta(1), epsilon(1). F(0) has three main subunits: a(1), b(2) and c(10-14). The alpha and beta chains form an alternating ring which encloses part of the gamma chain. F(1) is attached to F(0) by a central stalk formed by the gamma and epsilon chains, while a peripheral stalk is formed by the delta and b chains.</text>
</comment>
<comment type="subcellular location">
    <subcellularLocation>
        <location evidence="1">Cell membrane</location>
        <topology evidence="1">Peripheral membrane protein</topology>
    </subcellularLocation>
</comment>
<comment type="similarity">
    <text evidence="1">Belongs to the ATPase delta chain family.</text>
</comment>
<evidence type="ECO:0000255" key="1">
    <source>
        <dbReference type="HAMAP-Rule" id="MF_01416"/>
    </source>
</evidence>
<reference key="1">
    <citation type="journal article" date="2002" name="Genome Res.">
        <title>A complete sequence of the T. tengcongensis genome.</title>
        <authorList>
            <person name="Bao Q."/>
            <person name="Tian Y."/>
            <person name="Li W."/>
            <person name="Xu Z."/>
            <person name="Xuan Z."/>
            <person name="Hu S."/>
            <person name="Dong W."/>
            <person name="Yang J."/>
            <person name="Chen Y."/>
            <person name="Xue Y."/>
            <person name="Xu Y."/>
            <person name="Lai X."/>
            <person name="Huang L."/>
            <person name="Dong X."/>
            <person name="Ma Y."/>
            <person name="Ling L."/>
            <person name="Tan H."/>
            <person name="Chen R."/>
            <person name="Wang J."/>
            <person name="Yu J."/>
            <person name="Yang H."/>
        </authorList>
    </citation>
    <scope>NUCLEOTIDE SEQUENCE [LARGE SCALE GENOMIC DNA]</scope>
    <source>
        <strain>DSM 15242 / JCM 11007 / NBRC 100824 / MB4</strain>
    </source>
</reference>
<accession>Q8RC18</accession>
<feature type="chain" id="PRO_0000371183" description="ATP synthase subunit delta">
    <location>
        <begin position="1"/>
        <end position="177"/>
    </location>
</feature>
<dbReference type="EMBL" id="AE008691">
    <property type="protein sequence ID" value="AAM23902.1"/>
    <property type="molecule type" value="Genomic_DNA"/>
</dbReference>
<dbReference type="RefSeq" id="WP_011025045.1">
    <property type="nucleotide sequence ID" value="NC_003869.1"/>
</dbReference>
<dbReference type="SMR" id="Q8RC18"/>
<dbReference type="STRING" id="273068.TTE0634"/>
<dbReference type="KEGG" id="tte:TTE0634"/>
<dbReference type="eggNOG" id="COG0712">
    <property type="taxonomic scope" value="Bacteria"/>
</dbReference>
<dbReference type="HOGENOM" id="CLU_085114_4_2_9"/>
<dbReference type="OrthoDB" id="9802471at2"/>
<dbReference type="Proteomes" id="UP000000555">
    <property type="component" value="Chromosome"/>
</dbReference>
<dbReference type="GO" id="GO:0005886">
    <property type="term" value="C:plasma membrane"/>
    <property type="evidence" value="ECO:0007669"/>
    <property type="project" value="UniProtKB-SubCell"/>
</dbReference>
<dbReference type="GO" id="GO:0045259">
    <property type="term" value="C:proton-transporting ATP synthase complex"/>
    <property type="evidence" value="ECO:0007669"/>
    <property type="project" value="UniProtKB-KW"/>
</dbReference>
<dbReference type="GO" id="GO:0046933">
    <property type="term" value="F:proton-transporting ATP synthase activity, rotational mechanism"/>
    <property type="evidence" value="ECO:0007669"/>
    <property type="project" value="UniProtKB-UniRule"/>
</dbReference>
<dbReference type="Gene3D" id="1.10.520.20">
    <property type="entry name" value="N-terminal domain of the delta subunit of the F1F0-ATP synthase"/>
    <property type="match status" value="1"/>
</dbReference>
<dbReference type="HAMAP" id="MF_01416">
    <property type="entry name" value="ATP_synth_delta_bact"/>
    <property type="match status" value="1"/>
</dbReference>
<dbReference type="InterPro" id="IPR026015">
    <property type="entry name" value="ATP_synth_OSCP/delta_N_sf"/>
</dbReference>
<dbReference type="InterPro" id="IPR000711">
    <property type="entry name" value="ATPase_OSCP/dsu"/>
</dbReference>
<dbReference type="NCBIfam" id="TIGR01145">
    <property type="entry name" value="ATP_synt_delta"/>
    <property type="match status" value="1"/>
</dbReference>
<dbReference type="PANTHER" id="PTHR11910">
    <property type="entry name" value="ATP SYNTHASE DELTA CHAIN"/>
    <property type="match status" value="1"/>
</dbReference>
<dbReference type="Pfam" id="PF00213">
    <property type="entry name" value="OSCP"/>
    <property type="match status" value="1"/>
</dbReference>
<dbReference type="PRINTS" id="PR00125">
    <property type="entry name" value="ATPASEDELTA"/>
</dbReference>
<dbReference type="SUPFAM" id="SSF47928">
    <property type="entry name" value="N-terminal domain of the delta subunit of the F1F0-ATP synthase"/>
    <property type="match status" value="1"/>
</dbReference>